<organism>
    <name type="scientific">Homo sapiens</name>
    <name type="common">Human</name>
    <dbReference type="NCBI Taxonomy" id="9606"/>
    <lineage>
        <taxon>Eukaryota</taxon>
        <taxon>Metazoa</taxon>
        <taxon>Chordata</taxon>
        <taxon>Craniata</taxon>
        <taxon>Vertebrata</taxon>
        <taxon>Euteleostomi</taxon>
        <taxon>Mammalia</taxon>
        <taxon>Eutheria</taxon>
        <taxon>Euarchontoglires</taxon>
        <taxon>Primates</taxon>
        <taxon>Haplorrhini</taxon>
        <taxon>Catarrhini</taxon>
        <taxon>Hominidae</taxon>
        <taxon>Homo</taxon>
    </lineage>
</organism>
<protein>
    <recommendedName>
        <fullName>Secreted frizzled-related protein 3</fullName>
        <shortName>sFRP-3</shortName>
    </recommendedName>
    <alternativeName>
        <fullName>Frezzled</fullName>
    </alternativeName>
    <alternativeName>
        <fullName>Fritz</fullName>
    </alternativeName>
    <alternativeName>
        <fullName>Frizzled-related protein 1</fullName>
    </alternativeName>
    <alternativeName>
        <fullName>FrzB-1</fullName>
    </alternativeName>
</protein>
<reference key="1">
    <citation type="journal article" date="1996" name="J. Biol. Chem.">
        <title>Primary structure and tissue distribution of FRZB, a novel protein related to Drosophila frizzled, suggest a role in skeletal morphogenesis.</title>
        <authorList>
            <person name="Hoang B."/>
            <person name="Moos M. Jr."/>
            <person name="Vukicevic S."/>
            <person name="Luyten F.P."/>
        </authorList>
    </citation>
    <scope>NUCLEOTIDE SEQUENCE [MRNA]</scope>
    <source>
        <tissue>Placenta</tissue>
    </source>
</reference>
<reference key="2">
    <citation type="journal article" date="1997" name="Mech. Dev.">
        <title>Fritz: a secreted frizzled-related protein that inhibits Wnt activity.</title>
        <authorList>
            <person name="Mayr T."/>
            <person name="Deutsch U."/>
            <person name="Kuehl M."/>
            <person name="Drexler H.C.A."/>
            <person name="Lottspeich F."/>
            <person name="Deutzmann R."/>
            <person name="Wedlich D."/>
            <person name="Risau W."/>
        </authorList>
    </citation>
    <scope>NUCLEOTIDE SEQUENCE [MRNA]</scope>
</reference>
<reference key="3">
    <citation type="journal article" date="1997" name="Cell">
        <title>Frzb-1 is a secreted antagonist of Wnt signaling expressed in the Spemann organizer.</title>
        <authorList>
            <person name="Leyns L."/>
            <person name="Bouwmeester T."/>
            <person name="Kim S.-H."/>
            <person name="Piccolo S."/>
            <person name="de Robertis E.M."/>
        </authorList>
    </citation>
    <scope>NUCLEOTIDE SEQUENCE [MRNA]</scope>
    <source>
        <tissue>Embryo</tissue>
    </source>
</reference>
<reference key="4">
    <citation type="submission" date="2004-10" db="EMBL/GenBank/DDBJ databases">
        <title>Cloning of human full-length CDSs in BD Creator(TM) system donor vector.</title>
        <authorList>
            <person name="Kalnine N."/>
            <person name="Chen X."/>
            <person name="Rolfs A."/>
            <person name="Halleck A."/>
            <person name="Hines L."/>
            <person name="Eisenstein S."/>
            <person name="Koundinya M."/>
            <person name="Raphael J."/>
            <person name="Moreira D."/>
            <person name="Kelley T."/>
            <person name="LaBaer J."/>
            <person name="Lin Y."/>
            <person name="Phelan M."/>
            <person name="Farmer A."/>
        </authorList>
    </citation>
    <scope>NUCLEOTIDE SEQUENCE [LARGE SCALE MRNA]</scope>
</reference>
<reference key="5">
    <citation type="journal article" date="2004" name="Genome Res.">
        <title>The status, quality, and expansion of the NIH full-length cDNA project: the Mammalian Gene Collection (MGC).</title>
        <authorList>
            <consortium name="The MGC Project Team"/>
        </authorList>
    </citation>
    <scope>NUCLEOTIDE SEQUENCE [LARGE SCALE MRNA]</scope>
    <source>
        <tissue>Pancreas</tissue>
        <tissue>Spleen</tissue>
    </source>
</reference>
<reference key="6">
    <citation type="journal article" date="2004" name="Protein Sci.">
        <title>Signal peptide prediction based on analysis of experimentally verified cleavage sites.</title>
        <authorList>
            <person name="Zhang Z."/>
            <person name="Henzel W.J."/>
        </authorList>
    </citation>
    <scope>PROTEIN SEQUENCE OF 33-47</scope>
</reference>
<reference key="7">
    <citation type="journal article" date="2009" name="Mol. Cell. Biol.">
        <title>Myocilin is a modulator of Wnt signaling.</title>
        <authorList>
            <person name="Kwon H.S."/>
            <person name="Lee H.S."/>
            <person name="Ji Y."/>
            <person name="Rubin J.S."/>
            <person name="Tomarev S.I."/>
        </authorList>
    </citation>
    <scope>INTERACTION WITH MYOC</scope>
</reference>
<reference key="8">
    <citation type="journal article" date="2004" name="Proc. Natl. Acad. Sci. U.S.A.">
        <title>Functional variants within the secreted frizzled-related protein 3 gene are associated with hip osteoarthritis in females.</title>
        <authorList>
            <person name="Loughlin J."/>
            <person name="Dowling B."/>
            <person name="Chapman K."/>
            <person name="Marcelline L."/>
            <person name="Mustafa Z."/>
            <person name="Southam L."/>
            <person name="Ferreira A."/>
            <person name="Ciesielski C."/>
            <person name="Carson D.A."/>
            <person name="Corr M."/>
        </authorList>
    </citation>
    <scope>INVOLVEMENT IN OS1</scope>
    <scope>VARIANT OS1 GLY-324</scope>
    <scope>VARIANT TRP-200</scope>
</reference>
<dbReference type="EMBL" id="U24163">
    <property type="protein sequence ID" value="AAC50736.1"/>
    <property type="molecule type" value="mRNA"/>
</dbReference>
<dbReference type="EMBL" id="U91903">
    <property type="protein sequence ID" value="AAB51298.1"/>
    <property type="molecule type" value="mRNA"/>
</dbReference>
<dbReference type="EMBL" id="U68057">
    <property type="protein sequence ID" value="AAC51217.1"/>
    <property type="molecule type" value="mRNA"/>
</dbReference>
<dbReference type="EMBL" id="BT019883">
    <property type="protein sequence ID" value="AAV38686.1"/>
    <property type="molecule type" value="mRNA"/>
</dbReference>
<dbReference type="EMBL" id="BC027855">
    <property type="protein sequence ID" value="AAH27855.1"/>
    <property type="molecule type" value="mRNA"/>
</dbReference>
<dbReference type="CCDS" id="CCDS2286.1"/>
<dbReference type="RefSeq" id="NP_001454.2">
    <property type="nucleotide sequence ID" value="NM_001463.3"/>
</dbReference>
<dbReference type="SMR" id="Q92765"/>
<dbReference type="BioGRID" id="108765">
    <property type="interactions" value="11"/>
</dbReference>
<dbReference type="FunCoup" id="Q92765">
    <property type="interactions" value="306"/>
</dbReference>
<dbReference type="IntAct" id="Q92765">
    <property type="interactions" value="11"/>
</dbReference>
<dbReference type="MINT" id="Q92765"/>
<dbReference type="STRING" id="9606.ENSP00000295113"/>
<dbReference type="GlyConnect" id="1725">
    <property type="glycosylation" value="3 N-Linked glycans (1 site)"/>
</dbReference>
<dbReference type="GlyCosmos" id="Q92765">
    <property type="glycosylation" value="1 site, 2 glycans"/>
</dbReference>
<dbReference type="GlyGen" id="Q92765">
    <property type="glycosylation" value="2 sites, 10 N-linked glycans (1 site), 1 O-linked glycan (1 site)"/>
</dbReference>
<dbReference type="iPTMnet" id="Q92765"/>
<dbReference type="PhosphoSitePlus" id="Q92765"/>
<dbReference type="BioMuta" id="FRZB"/>
<dbReference type="DMDM" id="14194748"/>
<dbReference type="MassIVE" id="Q92765"/>
<dbReference type="PaxDb" id="9606-ENSP00000295113"/>
<dbReference type="PeptideAtlas" id="Q92765"/>
<dbReference type="ProteomicsDB" id="75449"/>
<dbReference type="Antibodypedia" id="3981">
    <property type="antibodies" value="352 antibodies from 30 providers"/>
</dbReference>
<dbReference type="DNASU" id="2487"/>
<dbReference type="Ensembl" id="ENST00000295113.5">
    <property type="protein sequence ID" value="ENSP00000295113.4"/>
    <property type="gene ID" value="ENSG00000162998.5"/>
</dbReference>
<dbReference type="GeneID" id="2487"/>
<dbReference type="KEGG" id="hsa:2487"/>
<dbReference type="MANE-Select" id="ENST00000295113.5">
    <property type="protein sequence ID" value="ENSP00000295113.4"/>
    <property type="RefSeq nucleotide sequence ID" value="NM_001463.4"/>
    <property type="RefSeq protein sequence ID" value="NP_001454.2"/>
</dbReference>
<dbReference type="UCSC" id="uc002upa.4">
    <property type="organism name" value="human"/>
</dbReference>
<dbReference type="AGR" id="HGNC:3959"/>
<dbReference type="CTD" id="2487"/>
<dbReference type="DisGeNET" id="2487"/>
<dbReference type="GeneCards" id="FRZB"/>
<dbReference type="HGNC" id="HGNC:3959">
    <property type="gene designation" value="FRZB"/>
</dbReference>
<dbReference type="HPA" id="ENSG00000162998">
    <property type="expression patterns" value="Group enriched (choroid plexus, lymphoid tissue, retina, tongue)"/>
</dbReference>
<dbReference type="MalaCards" id="FRZB"/>
<dbReference type="MIM" id="165720">
    <property type="type" value="phenotype"/>
</dbReference>
<dbReference type="MIM" id="605083">
    <property type="type" value="gene"/>
</dbReference>
<dbReference type="neXtProt" id="NX_Q92765"/>
<dbReference type="OpenTargets" id="ENSG00000162998"/>
<dbReference type="PharmGKB" id="PA28377"/>
<dbReference type="VEuPathDB" id="HostDB:ENSG00000162998"/>
<dbReference type="eggNOG" id="KOG3577">
    <property type="taxonomic scope" value="Eukaryota"/>
</dbReference>
<dbReference type="GeneTree" id="ENSGT00940000160494"/>
<dbReference type="HOGENOM" id="CLU_058446_1_0_1"/>
<dbReference type="InParanoid" id="Q92765"/>
<dbReference type="OMA" id="NAERCKC"/>
<dbReference type="OrthoDB" id="5946121at2759"/>
<dbReference type="PAN-GO" id="Q92765">
    <property type="GO annotations" value="6 GO annotations based on evolutionary models"/>
</dbReference>
<dbReference type="PhylomeDB" id="Q92765"/>
<dbReference type="PathwayCommons" id="Q92765"/>
<dbReference type="SignaLink" id="Q92765"/>
<dbReference type="SIGNOR" id="Q92765"/>
<dbReference type="BioGRID-ORCS" id="2487">
    <property type="hits" value="7 hits in 1149 CRISPR screens"/>
</dbReference>
<dbReference type="ChiTaRS" id="FRZB">
    <property type="organism name" value="human"/>
</dbReference>
<dbReference type="GenomeRNAi" id="2487"/>
<dbReference type="Pharos" id="Q92765">
    <property type="development level" value="Tbio"/>
</dbReference>
<dbReference type="PRO" id="PR:Q92765"/>
<dbReference type="Proteomes" id="UP000005640">
    <property type="component" value="Chromosome 2"/>
</dbReference>
<dbReference type="RNAct" id="Q92765">
    <property type="molecule type" value="protein"/>
</dbReference>
<dbReference type="Bgee" id="ENSG00000162998">
    <property type="expression patterns" value="Expressed in pigmented layer of retina and 188 other cell types or tissues"/>
</dbReference>
<dbReference type="ExpressionAtlas" id="Q92765">
    <property type="expression patterns" value="baseline and differential"/>
</dbReference>
<dbReference type="GO" id="GO:0005737">
    <property type="term" value="C:cytoplasm"/>
    <property type="evidence" value="ECO:0000318"/>
    <property type="project" value="GO_Central"/>
</dbReference>
<dbReference type="GO" id="GO:0005615">
    <property type="term" value="C:extracellular space"/>
    <property type="evidence" value="ECO:0007005"/>
    <property type="project" value="BHF-UCL"/>
</dbReference>
<dbReference type="GO" id="GO:0016020">
    <property type="term" value="C:membrane"/>
    <property type="evidence" value="ECO:0000304"/>
    <property type="project" value="ProtInc"/>
</dbReference>
<dbReference type="GO" id="GO:0017147">
    <property type="term" value="F:Wnt-protein binding"/>
    <property type="evidence" value="ECO:0000250"/>
    <property type="project" value="UniProtKB"/>
</dbReference>
<dbReference type="GO" id="GO:0060070">
    <property type="term" value="P:canonical Wnt signaling pathway"/>
    <property type="evidence" value="ECO:0000318"/>
    <property type="project" value="GO_Central"/>
</dbReference>
<dbReference type="GO" id="GO:0090103">
    <property type="term" value="P:cochlea morphogenesis"/>
    <property type="evidence" value="ECO:0007669"/>
    <property type="project" value="Ensembl"/>
</dbReference>
<dbReference type="GO" id="GO:0060029">
    <property type="term" value="P:convergent extension involved in organogenesis"/>
    <property type="evidence" value="ECO:0007669"/>
    <property type="project" value="Ensembl"/>
</dbReference>
<dbReference type="GO" id="GO:0002064">
    <property type="term" value="P:epithelial cell development"/>
    <property type="evidence" value="ECO:0007669"/>
    <property type="project" value="Ensembl"/>
</dbReference>
<dbReference type="GO" id="GO:0070365">
    <property type="term" value="P:hepatocyte differentiation"/>
    <property type="evidence" value="ECO:0007669"/>
    <property type="project" value="Ensembl"/>
</dbReference>
<dbReference type="GO" id="GO:0090090">
    <property type="term" value="P:negative regulation of canonical Wnt signaling pathway"/>
    <property type="evidence" value="ECO:0000314"/>
    <property type="project" value="UniProtKB"/>
</dbReference>
<dbReference type="GO" id="GO:0061037">
    <property type="term" value="P:negative regulation of cartilage development"/>
    <property type="evidence" value="ECO:0007669"/>
    <property type="project" value="Ensembl"/>
</dbReference>
<dbReference type="GO" id="GO:0010721">
    <property type="term" value="P:negative regulation of cell development"/>
    <property type="evidence" value="ECO:0007669"/>
    <property type="project" value="Ensembl"/>
</dbReference>
<dbReference type="GO" id="GO:0030308">
    <property type="term" value="P:negative regulation of cell growth"/>
    <property type="evidence" value="ECO:0000314"/>
    <property type="project" value="UniProtKB"/>
</dbReference>
<dbReference type="GO" id="GO:0008285">
    <property type="term" value="P:negative regulation of cell population proliferation"/>
    <property type="evidence" value="ECO:0000314"/>
    <property type="project" value="UniProtKB"/>
</dbReference>
<dbReference type="GO" id="GO:0070367">
    <property type="term" value="P:negative regulation of hepatocyte differentiation"/>
    <property type="evidence" value="ECO:0007669"/>
    <property type="project" value="Ensembl"/>
</dbReference>
<dbReference type="GO" id="GO:0030178">
    <property type="term" value="P:negative regulation of Wnt signaling pathway"/>
    <property type="evidence" value="ECO:0000314"/>
    <property type="project" value="UniProtKB"/>
</dbReference>
<dbReference type="GO" id="GO:0014033">
    <property type="term" value="P:neural crest cell differentiation"/>
    <property type="evidence" value="ECO:0007669"/>
    <property type="project" value="Ensembl"/>
</dbReference>
<dbReference type="GO" id="GO:0035567">
    <property type="term" value="P:non-canonical Wnt signaling pathway"/>
    <property type="evidence" value="ECO:0000318"/>
    <property type="project" value="GO_Central"/>
</dbReference>
<dbReference type="GO" id="GO:0043065">
    <property type="term" value="P:positive regulation of apoptotic process"/>
    <property type="evidence" value="ECO:0000316"/>
    <property type="project" value="MGI"/>
</dbReference>
<dbReference type="GO" id="GO:0045600">
    <property type="term" value="P:positive regulation of fat cell differentiation"/>
    <property type="evidence" value="ECO:0000314"/>
    <property type="project" value="MGI"/>
</dbReference>
<dbReference type="GO" id="GO:0001501">
    <property type="term" value="P:skeletal system development"/>
    <property type="evidence" value="ECO:0000304"/>
    <property type="project" value="ProtInc"/>
</dbReference>
<dbReference type="GO" id="GO:0061053">
    <property type="term" value="P:somite development"/>
    <property type="evidence" value="ECO:0007669"/>
    <property type="project" value="Ensembl"/>
</dbReference>
<dbReference type="CDD" id="cd07441">
    <property type="entry name" value="CRD_SFRP3"/>
    <property type="match status" value="1"/>
</dbReference>
<dbReference type="CDD" id="cd03581">
    <property type="entry name" value="NTR_Sfrp3_like"/>
    <property type="match status" value="1"/>
</dbReference>
<dbReference type="FunFam" id="2.40.50.120:FF:000010">
    <property type="entry name" value="secreted frizzled-related protein 3"/>
    <property type="match status" value="1"/>
</dbReference>
<dbReference type="FunFam" id="1.10.2000.10:FF:000005">
    <property type="entry name" value="secreted frizzled-related protein 4"/>
    <property type="match status" value="1"/>
</dbReference>
<dbReference type="Gene3D" id="2.40.50.120">
    <property type="match status" value="1"/>
</dbReference>
<dbReference type="Gene3D" id="1.10.2000.10">
    <property type="entry name" value="Frizzled cysteine-rich domain"/>
    <property type="match status" value="1"/>
</dbReference>
<dbReference type="InterPro" id="IPR015526">
    <property type="entry name" value="Frizzled/SFRP"/>
</dbReference>
<dbReference type="InterPro" id="IPR020067">
    <property type="entry name" value="Frizzled_dom"/>
</dbReference>
<dbReference type="InterPro" id="IPR036790">
    <property type="entry name" value="Frizzled_dom_sf"/>
</dbReference>
<dbReference type="InterPro" id="IPR001134">
    <property type="entry name" value="Netrin_domain"/>
</dbReference>
<dbReference type="InterPro" id="IPR018933">
    <property type="entry name" value="Netrin_module_non-TIMP"/>
</dbReference>
<dbReference type="InterPro" id="IPR035813">
    <property type="entry name" value="NTR_Sfrp3"/>
</dbReference>
<dbReference type="InterPro" id="IPR041759">
    <property type="entry name" value="SFRP3_CRD"/>
</dbReference>
<dbReference type="InterPro" id="IPR008993">
    <property type="entry name" value="TIMP-like_OB-fold"/>
</dbReference>
<dbReference type="PANTHER" id="PTHR11309">
    <property type="entry name" value="FRIZZLED"/>
    <property type="match status" value="1"/>
</dbReference>
<dbReference type="PANTHER" id="PTHR11309:SF97">
    <property type="entry name" value="SECRETED FRIZZLED-RELATED PROTEIN 3"/>
    <property type="match status" value="1"/>
</dbReference>
<dbReference type="Pfam" id="PF01392">
    <property type="entry name" value="Fz"/>
    <property type="match status" value="1"/>
</dbReference>
<dbReference type="Pfam" id="PF01759">
    <property type="entry name" value="NTR"/>
    <property type="match status" value="1"/>
</dbReference>
<dbReference type="SMART" id="SM00643">
    <property type="entry name" value="C345C"/>
    <property type="match status" value="1"/>
</dbReference>
<dbReference type="SMART" id="SM00063">
    <property type="entry name" value="FRI"/>
    <property type="match status" value="1"/>
</dbReference>
<dbReference type="SUPFAM" id="SSF63501">
    <property type="entry name" value="Frizzled cysteine-rich domain"/>
    <property type="match status" value="1"/>
</dbReference>
<dbReference type="SUPFAM" id="SSF50242">
    <property type="entry name" value="TIMP-like"/>
    <property type="match status" value="1"/>
</dbReference>
<dbReference type="PROSITE" id="PS50038">
    <property type="entry name" value="FZ"/>
    <property type="match status" value="1"/>
</dbReference>
<dbReference type="PROSITE" id="PS50189">
    <property type="entry name" value="NTR"/>
    <property type="match status" value="1"/>
</dbReference>
<gene>
    <name type="primary">FRZB</name>
    <name type="synonym">FIZ</name>
    <name type="synonym">FRE</name>
    <name type="synonym">FRP</name>
    <name type="synonym">FRZB1</name>
    <name type="synonym">SFRP3</name>
</gene>
<accession>Q92765</accession>
<accession>O00181</accession>
<accession>Q99686</accession>
<comment type="function">
    <text>Soluble frizzled-related proteins (sFRPS) function as modulators of Wnt signaling through direct interaction with Wnts. They have a role in regulating cell growth and differentiation in specific cell types. SFRP3/FRZB appears to be involved in limb skeletogenesis. Antagonist of Wnt8 signaling. Regulates chondrocyte maturation and long bone development.</text>
</comment>
<comment type="subunit">
    <text evidence="8">Interacts with MYOC.</text>
</comment>
<comment type="interaction">
    <interactant intactId="EBI-2822789">
        <id>Q92765</id>
    </interactant>
    <interactant intactId="EBI-3867333">
        <id>A8MQ03</id>
        <label>CYSRT1</label>
    </interactant>
    <organismsDiffer>false</organismsDiffer>
    <experiments>3</experiments>
</comment>
<comment type="subcellular location">
    <subcellularLocation>
        <location evidence="9">Secreted</location>
    </subcellularLocation>
</comment>
<comment type="tissue specificity">
    <text>Expressed primarily in the cartilaginous cores of the long bone during embryonic and fetal development and in the appendicular skeleton (6-13 weeks). At 13 weeks of gestation, transcripts were present in early chondroblasts of the tarsal bones of the foot, the carpal bones of the hands and the epiphysis of long bones. Highly expressed in placenta and heart, followed by brain, skeletal muscle, kidney and pancreas. Weakly expressed in lung and liver.</text>
</comment>
<comment type="domain">
    <text evidence="1">The FZ domain is involved in binding with Wnt ligands.</text>
</comment>
<comment type="disease" evidence="6">
    <disease id="DI-02641">
        <name>Osteoarthritis 1</name>
        <acronym>OS1</acronym>
        <description>A degenerative disease of the joints characterized by degradation of the hyaline articular cartilage and remodeling of the subchondral bone with sclerosis. Clinical symptoms include pain and joint stiffness often leading to significant disability and joint replacement.</description>
        <dbReference type="MIM" id="165720"/>
    </disease>
    <text>Disease susceptibility is associated with variants affecting the gene represented in this entry.</text>
</comment>
<comment type="similarity">
    <text evidence="9">Belongs to the secreted frizzled-related protein (sFRP) family.</text>
</comment>
<comment type="online information" name="Atlas of Genetics and Cytogenetics in Oncology and Haematology">
    <link uri="https://atlasgeneticsoncology.org/gene/44457/FRZB"/>
</comment>
<keyword id="KW-0217">Developmental protein</keyword>
<keyword id="KW-0221">Differentiation</keyword>
<keyword id="KW-0903">Direct protein sequencing</keyword>
<keyword id="KW-0225">Disease variant</keyword>
<keyword id="KW-1015">Disulfide bond</keyword>
<keyword id="KW-0325">Glycoprotein</keyword>
<keyword id="KW-1267">Proteomics identification</keyword>
<keyword id="KW-1185">Reference proteome</keyword>
<keyword id="KW-0964">Secreted</keyword>
<keyword id="KW-0732">Signal</keyword>
<keyword id="KW-0879">Wnt signaling pathway</keyword>
<feature type="signal peptide" evidence="7">
    <location>
        <begin position="1"/>
        <end position="32"/>
    </location>
</feature>
<feature type="chain" id="PRO_0000032546" description="Secreted frizzled-related protein 3">
    <location>
        <begin position="33"/>
        <end position="325"/>
    </location>
</feature>
<feature type="domain" description="FZ" evidence="3">
    <location>
        <begin position="33"/>
        <end position="150"/>
    </location>
</feature>
<feature type="domain" description="NTR" evidence="4">
    <location>
        <begin position="178"/>
        <end position="298"/>
    </location>
</feature>
<feature type="region of interest" description="Disordered" evidence="5">
    <location>
        <begin position="297"/>
        <end position="325"/>
    </location>
</feature>
<feature type="compositionally biased region" description="Low complexity" evidence="5">
    <location>
        <begin position="299"/>
        <end position="314"/>
    </location>
</feature>
<feature type="compositionally biased region" description="Polar residues" evidence="5">
    <location>
        <begin position="315"/>
        <end position="325"/>
    </location>
</feature>
<feature type="glycosylation site" description="N-linked (GlcNAc...) asparagine" evidence="2">
    <location>
        <position position="49"/>
    </location>
</feature>
<feature type="disulfide bond" evidence="1">
    <location>
        <begin position="35"/>
        <end position="96"/>
    </location>
</feature>
<feature type="disulfide bond" evidence="1">
    <location>
        <begin position="43"/>
        <end position="89"/>
    </location>
</feature>
<feature type="disulfide bond" evidence="1">
    <location>
        <begin position="80"/>
        <end position="119"/>
    </location>
</feature>
<feature type="disulfide bond" evidence="1">
    <location>
        <begin position="108"/>
        <end position="147"/>
    </location>
</feature>
<feature type="disulfide bond" evidence="1">
    <location>
        <begin position="112"/>
        <end position="136"/>
    </location>
</feature>
<feature type="sequence variant" id="VAR_021411" description="In dbSNP:rs288326." evidence="6">
    <original>R</original>
    <variation>W</variation>
    <location>
        <position position="200"/>
    </location>
</feature>
<feature type="sequence variant" id="VAR_014862" description="In OS1; associated with disease susceptibility; has diminished ability to antagonize Wnt signaling, in vitro; dbSNP:rs7775." evidence="6">
    <original>R</original>
    <variation>G</variation>
    <location>
        <position position="324"/>
    </location>
</feature>
<feature type="sequence conflict" description="In Ref. 2; AAB51298." evidence="9" ref="2">
    <original>A</original>
    <variation>D</variation>
    <location>
        <position position="63"/>
    </location>
</feature>
<feature type="sequence conflict" description="In Ref. 1; AAC50736." evidence="9" ref="1">
    <original>K</original>
    <variation>N</variation>
    <location>
        <position position="106"/>
    </location>
</feature>
<proteinExistence type="evidence at protein level"/>
<sequence length="325" mass="36254">MVCGSPGGMLLLRAGLLALAALCLLRVPGARAAACEPVRIPLCKSLPWNMTKMPNHLHHSTQANAILAIEQFEGLLGTHCSPDLLFFLCAMYAPICTIDFQHEPIKPCKSVCERARQGCEPILIKYRHSWPENLACEELPVYDRGVCISPEAIVTADGADFPMDSSNGNCRGASSERCKCKPIRATQKTYFRNNYNYVIRAKVKEIKTKCHDVTAVVEVKEILKSSLVNIPRDTVNLYTSSGCLCPPLNVNEEYIIMGYEDEERSRLLLVEGSIAEKWKDRLGKKVKRWDMKLRHLGLSKSDSSNSDSTQSQKSGRNSNPRQARN</sequence>
<evidence type="ECO:0000250" key="1"/>
<evidence type="ECO:0000255" key="2"/>
<evidence type="ECO:0000255" key="3">
    <source>
        <dbReference type="PROSITE-ProRule" id="PRU00090"/>
    </source>
</evidence>
<evidence type="ECO:0000255" key="4">
    <source>
        <dbReference type="PROSITE-ProRule" id="PRU00295"/>
    </source>
</evidence>
<evidence type="ECO:0000256" key="5">
    <source>
        <dbReference type="SAM" id="MobiDB-lite"/>
    </source>
</evidence>
<evidence type="ECO:0000269" key="6">
    <source>
    </source>
</evidence>
<evidence type="ECO:0000269" key="7">
    <source>
    </source>
</evidence>
<evidence type="ECO:0000269" key="8">
    <source>
    </source>
</evidence>
<evidence type="ECO:0000305" key="9"/>
<name>SFRP3_HUMAN</name>